<feature type="chain" id="PRO_0000002107" description="Arginine biosynthesis bifunctional protein ArgJ alpha chain" evidence="1">
    <location>
        <begin position="1"/>
        <end position="193"/>
    </location>
</feature>
<feature type="chain" id="PRO_0000002108" description="Arginine biosynthesis bifunctional protein ArgJ beta chain" evidence="1">
    <location>
        <begin position="194"/>
        <end position="407"/>
    </location>
</feature>
<feature type="active site" description="Nucleophile" evidence="1">
    <location>
        <position position="194"/>
    </location>
</feature>
<feature type="binding site" evidence="1">
    <location>
        <position position="157"/>
    </location>
    <ligand>
        <name>substrate</name>
    </ligand>
</feature>
<feature type="binding site" evidence="1">
    <location>
        <position position="183"/>
    </location>
    <ligand>
        <name>substrate</name>
    </ligand>
</feature>
<feature type="binding site" evidence="1">
    <location>
        <position position="194"/>
    </location>
    <ligand>
        <name>substrate</name>
    </ligand>
</feature>
<feature type="binding site" evidence="1">
    <location>
        <position position="280"/>
    </location>
    <ligand>
        <name>substrate</name>
    </ligand>
</feature>
<feature type="binding site" evidence="1">
    <location>
        <position position="402"/>
    </location>
    <ligand>
        <name>substrate</name>
    </ligand>
</feature>
<feature type="binding site" evidence="1">
    <location>
        <position position="407"/>
    </location>
    <ligand>
        <name>substrate</name>
    </ligand>
</feature>
<feature type="site" description="Involved in the stabilization of negative charge on the oxyanion by the formation of the oxyanion hole" evidence="1">
    <location>
        <position position="120"/>
    </location>
</feature>
<feature type="site" description="Involved in the stabilization of negative charge on the oxyanion by the formation of the oxyanion hole" evidence="1">
    <location>
        <position position="121"/>
    </location>
</feature>
<feature type="site" description="Cleavage; by autolysis" evidence="1">
    <location>
        <begin position="193"/>
        <end position="194"/>
    </location>
</feature>
<comment type="function">
    <text evidence="1">Catalyzes two activities which are involved in the cyclic version of arginine biosynthesis: the synthesis of N-acetylglutamate from glutamate and acetyl-CoA as the acetyl donor, and of ornithine by transacetylation between N(2)-acetylornithine and glutamate.</text>
</comment>
<comment type="catalytic activity">
    <reaction evidence="1">
        <text>N(2)-acetyl-L-ornithine + L-glutamate = N-acetyl-L-glutamate + L-ornithine</text>
        <dbReference type="Rhea" id="RHEA:15349"/>
        <dbReference type="ChEBI" id="CHEBI:29985"/>
        <dbReference type="ChEBI" id="CHEBI:44337"/>
        <dbReference type="ChEBI" id="CHEBI:46911"/>
        <dbReference type="ChEBI" id="CHEBI:57805"/>
        <dbReference type="EC" id="2.3.1.35"/>
    </reaction>
</comment>
<comment type="catalytic activity">
    <reaction evidence="1">
        <text>L-glutamate + acetyl-CoA = N-acetyl-L-glutamate + CoA + H(+)</text>
        <dbReference type="Rhea" id="RHEA:24292"/>
        <dbReference type="ChEBI" id="CHEBI:15378"/>
        <dbReference type="ChEBI" id="CHEBI:29985"/>
        <dbReference type="ChEBI" id="CHEBI:44337"/>
        <dbReference type="ChEBI" id="CHEBI:57287"/>
        <dbReference type="ChEBI" id="CHEBI:57288"/>
        <dbReference type="EC" id="2.3.1.1"/>
    </reaction>
</comment>
<comment type="pathway">
    <text evidence="1">Amino-acid biosynthesis; L-arginine biosynthesis; L-ornithine and N-acetyl-L-glutamate from L-glutamate and N(2)-acetyl-L-ornithine (cyclic): step 1/1.</text>
</comment>
<comment type="pathway">
    <text evidence="1">Amino-acid biosynthesis; L-arginine biosynthesis; N(2)-acetyl-L-ornithine from L-glutamate: step 1/4.</text>
</comment>
<comment type="subunit">
    <text evidence="1">Heterotetramer of two alpha and two beta chains.</text>
</comment>
<comment type="subcellular location">
    <subcellularLocation>
        <location evidence="1">Cytoplasm</location>
    </subcellularLocation>
</comment>
<comment type="similarity">
    <text evidence="1">Belongs to the ArgJ family.</text>
</comment>
<evidence type="ECO:0000255" key="1">
    <source>
        <dbReference type="HAMAP-Rule" id="MF_01106"/>
    </source>
</evidence>
<reference key="1">
    <citation type="journal article" date="2004" name="Nucleic Acids Res.">
        <title>The genome sequence of Bacillus cereus ATCC 10987 reveals metabolic adaptations and a large plasmid related to Bacillus anthracis pXO1.</title>
        <authorList>
            <person name="Rasko D.A."/>
            <person name="Ravel J."/>
            <person name="Oekstad O.A."/>
            <person name="Helgason E."/>
            <person name="Cer R.Z."/>
            <person name="Jiang L."/>
            <person name="Shores K.A."/>
            <person name="Fouts D.E."/>
            <person name="Tourasse N.J."/>
            <person name="Angiuoli S.V."/>
            <person name="Kolonay J.F."/>
            <person name="Nelson W.C."/>
            <person name="Kolstoe A.-B."/>
            <person name="Fraser C.M."/>
            <person name="Read T.D."/>
        </authorList>
    </citation>
    <scope>NUCLEOTIDE SEQUENCE [LARGE SCALE GENOMIC DNA]</scope>
    <source>
        <strain>ATCC 10987 / NRS 248</strain>
    </source>
</reference>
<protein>
    <recommendedName>
        <fullName evidence="1">Arginine biosynthesis bifunctional protein ArgJ</fullName>
    </recommendedName>
    <domain>
        <recommendedName>
            <fullName evidence="1">Glutamate N-acetyltransferase</fullName>
            <ecNumber evidence="1">2.3.1.35</ecNumber>
        </recommendedName>
        <alternativeName>
            <fullName evidence="1">Ornithine acetyltransferase</fullName>
            <shortName evidence="1">OATase</shortName>
        </alternativeName>
        <alternativeName>
            <fullName evidence="1">Ornithine transacetylase</fullName>
        </alternativeName>
    </domain>
    <domain>
        <recommendedName>
            <fullName evidence="1">Amino-acid acetyltransferase</fullName>
            <ecNumber evidence="1">2.3.1.1</ecNumber>
        </recommendedName>
        <alternativeName>
            <fullName evidence="1">N-acetylglutamate synthase</fullName>
            <shortName evidence="1">AGSase</shortName>
        </alternativeName>
    </domain>
    <component>
        <recommendedName>
            <fullName evidence="1">Arginine biosynthesis bifunctional protein ArgJ alpha chain</fullName>
        </recommendedName>
    </component>
    <component>
        <recommendedName>
            <fullName evidence="1">Arginine biosynthesis bifunctional protein ArgJ beta chain</fullName>
        </recommendedName>
    </component>
</protein>
<sequence length="407" mass="43899">MIKVASITKVENGSIVTPKGFSAIGTAIGLKKEKKDLGAIVCDTPASCAAVYTTNQIQAAPLQVTKDSIATEGKLQAIIVNSGNANACTGMKGLQDAYEMRALGAEHFGLKENYVAVASTGVIGVPLPMDIIRNGIATLIPAKEEREAHSFSEAILTTDLITKETCYEMVIDGEKVLIAGVAKGSGMIHPNMATMLSFITTDAHIEHDVLQTTLSQITNHTFNQITIDGDTSTNDMVIVMASGLSETKPINMEHADWETFVFALQKVCEDLAKKIAQDGEGATKLIEVNVLGARTNEEAKKIAKQIVGSSLVKTAIHGEDPNWGRIISTIGQSEVAINPNTIDITLQSIAVLKNSEPQMFSEEEMKMRLQEHEIMIDVNLHLGEETGSAWGCDLSYEYVKINACYRT</sequence>
<keyword id="KW-0012">Acyltransferase</keyword>
<keyword id="KW-0028">Amino-acid biosynthesis</keyword>
<keyword id="KW-0055">Arginine biosynthesis</keyword>
<keyword id="KW-0068">Autocatalytic cleavage</keyword>
<keyword id="KW-0963">Cytoplasm</keyword>
<keyword id="KW-0511">Multifunctional enzyme</keyword>
<keyword id="KW-0808">Transferase</keyword>
<organism>
    <name type="scientific">Bacillus cereus (strain ATCC 10987 / NRS 248)</name>
    <dbReference type="NCBI Taxonomy" id="222523"/>
    <lineage>
        <taxon>Bacteria</taxon>
        <taxon>Bacillati</taxon>
        <taxon>Bacillota</taxon>
        <taxon>Bacilli</taxon>
        <taxon>Bacillales</taxon>
        <taxon>Bacillaceae</taxon>
        <taxon>Bacillus</taxon>
        <taxon>Bacillus cereus group</taxon>
    </lineage>
</organism>
<dbReference type="EC" id="2.3.1.35" evidence="1"/>
<dbReference type="EC" id="2.3.1.1" evidence="1"/>
<dbReference type="EMBL" id="AE017194">
    <property type="protein sequence ID" value="AAS43103.1"/>
    <property type="molecule type" value="Genomic_DNA"/>
</dbReference>
<dbReference type="SMR" id="P62057"/>
<dbReference type="MEROPS" id="T05.002"/>
<dbReference type="KEGG" id="bca:BCE_4202"/>
<dbReference type="HOGENOM" id="CLU_027172_1_0_9"/>
<dbReference type="UniPathway" id="UPA00068">
    <property type="reaction ID" value="UER00106"/>
</dbReference>
<dbReference type="UniPathway" id="UPA00068">
    <property type="reaction ID" value="UER00111"/>
</dbReference>
<dbReference type="Proteomes" id="UP000002527">
    <property type="component" value="Chromosome"/>
</dbReference>
<dbReference type="GO" id="GO:0005737">
    <property type="term" value="C:cytoplasm"/>
    <property type="evidence" value="ECO:0007669"/>
    <property type="project" value="UniProtKB-SubCell"/>
</dbReference>
<dbReference type="GO" id="GO:0004358">
    <property type="term" value="F:glutamate N-acetyltransferase activity"/>
    <property type="evidence" value="ECO:0007669"/>
    <property type="project" value="UniProtKB-UniRule"/>
</dbReference>
<dbReference type="GO" id="GO:0004042">
    <property type="term" value="F:L-glutamate N-acetyltransferase activity"/>
    <property type="evidence" value="ECO:0007669"/>
    <property type="project" value="UniProtKB-UniRule"/>
</dbReference>
<dbReference type="GO" id="GO:0006526">
    <property type="term" value="P:L-arginine biosynthetic process"/>
    <property type="evidence" value="ECO:0007669"/>
    <property type="project" value="UniProtKB-UniRule"/>
</dbReference>
<dbReference type="GO" id="GO:0006592">
    <property type="term" value="P:ornithine biosynthetic process"/>
    <property type="evidence" value="ECO:0007669"/>
    <property type="project" value="TreeGrafter"/>
</dbReference>
<dbReference type="CDD" id="cd02152">
    <property type="entry name" value="OAT"/>
    <property type="match status" value="1"/>
</dbReference>
<dbReference type="FunFam" id="3.10.20.340:FF:000001">
    <property type="entry name" value="Arginine biosynthesis bifunctional protein ArgJ, chloroplastic"/>
    <property type="match status" value="1"/>
</dbReference>
<dbReference type="FunFam" id="3.60.70.12:FF:000001">
    <property type="entry name" value="Arginine biosynthesis bifunctional protein ArgJ, chloroplastic"/>
    <property type="match status" value="1"/>
</dbReference>
<dbReference type="FunFam" id="3.30.2330.10:FF:000001">
    <property type="entry name" value="Arginine biosynthesis bifunctional protein ArgJ, mitochondrial"/>
    <property type="match status" value="1"/>
</dbReference>
<dbReference type="Gene3D" id="3.30.2330.10">
    <property type="entry name" value="arginine biosynthesis bifunctional protein suprefamily"/>
    <property type="match status" value="1"/>
</dbReference>
<dbReference type="Gene3D" id="3.10.20.340">
    <property type="entry name" value="ArgJ beta chain, C-terminal domain"/>
    <property type="match status" value="1"/>
</dbReference>
<dbReference type="Gene3D" id="3.60.70.12">
    <property type="entry name" value="L-amino peptidase D-ALA esterase/amidase"/>
    <property type="match status" value="1"/>
</dbReference>
<dbReference type="HAMAP" id="MF_01106">
    <property type="entry name" value="ArgJ"/>
    <property type="match status" value="1"/>
</dbReference>
<dbReference type="InterPro" id="IPR002813">
    <property type="entry name" value="Arg_biosynth_ArgJ"/>
</dbReference>
<dbReference type="InterPro" id="IPR016117">
    <property type="entry name" value="ArgJ-like_dom_sf"/>
</dbReference>
<dbReference type="InterPro" id="IPR042195">
    <property type="entry name" value="ArgJ_beta_C"/>
</dbReference>
<dbReference type="NCBIfam" id="TIGR00120">
    <property type="entry name" value="ArgJ"/>
    <property type="match status" value="1"/>
</dbReference>
<dbReference type="NCBIfam" id="NF003802">
    <property type="entry name" value="PRK05388.1"/>
    <property type="match status" value="1"/>
</dbReference>
<dbReference type="PANTHER" id="PTHR23100">
    <property type="entry name" value="ARGININE BIOSYNTHESIS BIFUNCTIONAL PROTEIN ARGJ"/>
    <property type="match status" value="1"/>
</dbReference>
<dbReference type="PANTHER" id="PTHR23100:SF0">
    <property type="entry name" value="ARGININE BIOSYNTHESIS BIFUNCTIONAL PROTEIN ARGJ, MITOCHONDRIAL"/>
    <property type="match status" value="1"/>
</dbReference>
<dbReference type="Pfam" id="PF01960">
    <property type="entry name" value="ArgJ"/>
    <property type="match status" value="1"/>
</dbReference>
<dbReference type="SUPFAM" id="SSF56266">
    <property type="entry name" value="DmpA/ArgJ-like"/>
    <property type="match status" value="1"/>
</dbReference>
<accession>P62057</accession>
<gene>
    <name evidence="1" type="primary">argJ</name>
    <name type="ordered locus">BCE_4202</name>
</gene>
<proteinExistence type="inferred from homology"/>
<name>ARGJ_BACC1</name>